<proteinExistence type="evidence at protein level"/>
<keyword id="KW-1185">Reference proteome</keyword>
<comment type="miscellaneous">
    <text evidence="3">Primate-specific FAM90A gene family, thought to have arisen during multiple duplication and rearrangement events.</text>
</comment>
<comment type="similarity">
    <text evidence="2">Belongs to the FAM90 family.</text>
</comment>
<protein>
    <recommendedName>
        <fullName>Protein FAM90A20</fullName>
    </recommendedName>
    <alternativeName>
        <fullName>Protein FAM90A20P</fullName>
    </alternativeName>
</protein>
<sequence>MMARRDPTSWAKRLVRAQTLQKQRRAPVGPRAPPPDEEDPRLKCKNCGAFGHTARSTRCPMKCWKAALVPATLGKKEGKENLKPWKPGVEANPGPLNKDKGEKEERPRQQDPQRKALLHMFSGKPPEKPLPNGKGSTESSDYLRVARGPMPVHTTCKRPRMDPVLSGRSATEMSGRGSVLASLSPLRKASLSSSSSLGPKERQTGAAADIPRPAVRHQVHETLLVVEPTHSSPEGSCREVPQAASKTHGLLQAVRTQAQDKRPAVTSQPCPSAATHSLGLGSNLSFGSGAKRPAQAPIQACLNFPKKPRLGPFQIPESTIQGGELGAPENLQPPPAATELGPSRSPQMGRRTPAQVPSVERQPPHRRPCLPTAQACTMSHHPAASHDGAQPLRVLFRRLENGRWSSSLLAAPSFHSPEKPGAFLAQSPHVSEKSEAPCVRVPPSVLYEDLQVSSSSEDSDSDLE</sequence>
<gene>
    <name evidence="4" type="primary">FAM90A20</name>
    <name evidence="4" type="synonym">FAM90A20P</name>
</gene>
<name>F90AK_HUMAN</name>
<feature type="chain" id="PRO_0000299598" description="Protein FAM90A20">
    <location>
        <begin position="1"/>
        <end position="464"/>
    </location>
</feature>
<feature type="region of interest" description="Disordered" evidence="1">
    <location>
        <begin position="16"/>
        <end position="42"/>
    </location>
</feature>
<feature type="region of interest" description="Disordered" evidence="1">
    <location>
        <begin position="71"/>
        <end position="213"/>
    </location>
</feature>
<feature type="region of interest" description="Disordered" evidence="1">
    <location>
        <begin position="228"/>
        <end position="247"/>
    </location>
</feature>
<feature type="region of interest" description="Disordered" evidence="1">
    <location>
        <begin position="254"/>
        <end position="273"/>
    </location>
</feature>
<feature type="region of interest" description="Disordered" evidence="1">
    <location>
        <begin position="309"/>
        <end position="389"/>
    </location>
</feature>
<feature type="region of interest" description="Disordered" evidence="1">
    <location>
        <begin position="418"/>
        <end position="437"/>
    </location>
</feature>
<feature type="compositionally biased region" description="Basic and acidic residues" evidence="1">
    <location>
        <begin position="74"/>
        <end position="83"/>
    </location>
</feature>
<feature type="compositionally biased region" description="Basic and acidic residues" evidence="1">
    <location>
        <begin position="97"/>
        <end position="114"/>
    </location>
</feature>
<feature type="compositionally biased region" description="Low complexity" evidence="1">
    <location>
        <begin position="180"/>
        <end position="197"/>
    </location>
</feature>
<organism>
    <name type="scientific">Homo sapiens</name>
    <name type="common">Human</name>
    <dbReference type="NCBI Taxonomy" id="9606"/>
    <lineage>
        <taxon>Eukaryota</taxon>
        <taxon>Metazoa</taxon>
        <taxon>Chordata</taxon>
        <taxon>Craniata</taxon>
        <taxon>Vertebrata</taxon>
        <taxon>Euteleostomi</taxon>
        <taxon>Mammalia</taxon>
        <taxon>Eutheria</taxon>
        <taxon>Euarchontoglires</taxon>
        <taxon>Primates</taxon>
        <taxon>Haplorrhini</taxon>
        <taxon>Catarrhini</taxon>
        <taxon>Hominidae</taxon>
        <taxon>Homo</taxon>
    </lineage>
</organism>
<accession>A6NIJ5</accession>
<reference key="1">
    <citation type="journal article" date="2006" name="Nature">
        <title>DNA sequence and analysis of human chromosome 8.</title>
        <authorList>
            <person name="Nusbaum C."/>
            <person name="Mikkelsen T.S."/>
            <person name="Zody M.C."/>
            <person name="Asakawa S."/>
            <person name="Taudien S."/>
            <person name="Garber M."/>
            <person name="Kodira C.D."/>
            <person name="Schueler M.G."/>
            <person name="Shimizu A."/>
            <person name="Whittaker C.A."/>
            <person name="Chang J.L."/>
            <person name="Cuomo C.A."/>
            <person name="Dewar K."/>
            <person name="FitzGerald M.G."/>
            <person name="Yang X."/>
            <person name="Allen N.R."/>
            <person name="Anderson S."/>
            <person name="Asakawa T."/>
            <person name="Blechschmidt K."/>
            <person name="Bloom T."/>
            <person name="Borowsky M.L."/>
            <person name="Butler J."/>
            <person name="Cook A."/>
            <person name="Corum B."/>
            <person name="DeArellano K."/>
            <person name="DeCaprio D."/>
            <person name="Dooley K.T."/>
            <person name="Dorris L. III"/>
            <person name="Engels R."/>
            <person name="Gloeckner G."/>
            <person name="Hafez N."/>
            <person name="Hagopian D.S."/>
            <person name="Hall J.L."/>
            <person name="Ishikawa S.K."/>
            <person name="Jaffe D.B."/>
            <person name="Kamat A."/>
            <person name="Kudoh J."/>
            <person name="Lehmann R."/>
            <person name="Lokitsang T."/>
            <person name="Macdonald P."/>
            <person name="Major J.E."/>
            <person name="Matthews C.D."/>
            <person name="Mauceli E."/>
            <person name="Menzel U."/>
            <person name="Mihalev A.H."/>
            <person name="Minoshima S."/>
            <person name="Murayama Y."/>
            <person name="Naylor J.W."/>
            <person name="Nicol R."/>
            <person name="Nguyen C."/>
            <person name="O'Leary S.B."/>
            <person name="O'Neill K."/>
            <person name="Parker S.C.J."/>
            <person name="Polley A."/>
            <person name="Raymond C.K."/>
            <person name="Reichwald K."/>
            <person name="Rodriguez J."/>
            <person name="Sasaki T."/>
            <person name="Schilhabel M."/>
            <person name="Siddiqui R."/>
            <person name="Smith C.L."/>
            <person name="Sneddon T.P."/>
            <person name="Talamas J.A."/>
            <person name="Tenzin P."/>
            <person name="Topham K."/>
            <person name="Venkataraman V."/>
            <person name="Wen G."/>
            <person name="Yamazaki S."/>
            <person name="Young S.K."/>
            <person name="Zeng Q."/>
            <person name="Zimmer A.R."/>
            <person name="Rosenthal A."/>
            <person name="Birren B.W."/>
            <person name="Platzer M."/>
            <person name="Shimizu N."/>
            <person name="Lander E.S."/>
        </authorList>
    </citation>
    <scope>NUCLEOTIDE SEQUENCE [LARGE SCALE GENOMIC DNA]</scope>
</reference>
<reference key="2">
    <citation type="journal article" date="2007" name="Hum. Mol. Genet.">
        <title>Characterization and evolution of the novel gene family FAM90A in primates originated by multiple duplication and rearrangement events.</title>
        <authorList>
            <person name="Bosch N."/>
            <person name="Caceres M."/>
            <person name="Cardone M.F."/>
            <person name="Carreras A."/>
            <person name="Ballana E."/>
            <person name="Rocchi M."/>
            <person name="Armengol L."/>
            <person name="Estivill X."/>
        </authorList>
    </citation>
    <scope>CHARACTERIZATION</scope>
</reference>
<evidence type="ECO:0000256" key="1">
    <source>
        <dbReference type="SAM" id="MobiDB-lite"/>
    </source>
</evidence>
<evidence type="ECO:0000305" key="2"/>
<evidence type="ECO:0000305" key="3">
    <source>
    </source>
</evidence>
<evidence type="ECO:0000312" key="4">
    <source>
        <dbReference type="HGNC" id="HGNC:32268"/>
    </source>
</evidence>
<dbReference type="EMBL" id="AF228730">
    <property type="status" value="NOT_ANNOTATED_CDS"/>
    <property type="molecule type" value="Genomic_DNA"/>
</dbReference>
<dbReference type="RefSeq" id="NP_001410461.1">
    <property type="nucleotide sequence ID" value="NM_001423532.1"/>
</dbReference>
<dbReference type="BioMuta" id="HGNC:32268"/>
<dbReference type="MassIVE" id="A6NIJ5"/>
<dbReference type="Ensembl" id="ENST00000528221.1">
    <property type="protein sequence ID" value="ENSP00000514265.1"/>
    <property type="gene ID" value="ENSG00000233295.3"/>
</dbReference>
<dbReference type="GeneID" id="728430"/>
<dbReference type="MANE-Select" id="ENST00000528221.1">
    <property type="protein sequence ID" value="ENSP00000514265.1"/>
    <property type="RefSeq nucleotide sequence ID" value="NM_001423532.1"/>
    <property type="RefSeq protein sequence ID" value="NP_001410461.1"/>
</dbReference>
<dbReference type="AGR" id="HGNC:32268"/>
<dbReference type="GeneCards" id="FAM90A20"/>
<dbReference type="HGNC" id="HGNC:32268">
    <property type="gene designation" value="FAM90A20"/>
</dbReference>
<dbReference type="HPA" id="ENSG00000233295">
    <property type="expression patterns" value="Not detected"/>
</dbReference>
<dbReference type="MIM" id="613054">
    <property type="type" value="gene"/>
</dbReference>
<dbReference type="neXtProt" id="NX_A6NIJ5"/>
<dbReference type="PharmGKB" id="PA142671815"/>
<dbReference type="GeneTree" id="ENSGT00910000144208"/>
<dbReference type="InParanoid" id="A6NIJ5"/>
<dbReference type="PAN-GO" id="A6NIJ5">
    <property type="GO annotations" value="0 GO annotations based on evolutionary models"/>
</dbReference>
<dbReference type="PhylomeDB" id="A6NIJ5"/>
<dbReference type="PathwayCommons" id="A6NIJ5"/>
<dbReference type="Pharos" id="A6NIJ5">
    <property type="development level" value="Tdark"/>
</dbReference>
<dbReference type="PRO" id="PR:A6NIJ5"/>
<dbReference type="Proteomes" id="UP000005640">
    <property type="component" value="Chromosome 8"/>
</dbReference>
<dbReference type="RNAct" id="A6NIJ5">
    <property type="molecule type" value="protein"/>
</dbReference>
<dbReference type="InterPro" id="IPR039213">
    <property type="entry name" value="FAM90"/>
</dbReference>
<dbReference type="InterPro" id="IPR041670">
    <property type="entry name" value="Znf-CCHC_6"/>
</dbReference>
<dbReference type="PANTHER" id="PTHR16035:SF14">
    <property type="entry name" value="FAMILY WITH SEQUENCE SIMILARITY 90 MEMBER A11, PSEUDOGENE-RELATED"/>
    <property type="match status" value="1"/>
</dbReference>
<dbReference type="PANTHER" id="PTHR16035">
    <property type="entry name" value="PROTEIN FAM90A1"/>
    <property type="match status" value="1"/>
</dbReference>
<dbReference type="Pfam" id="PF15288">
    <property type="entry name" value="zf-CCHC_6"/>
    <property type="match status" value="1"/>
</dbReference>